<accession>P74266</accession>
<reference key="1">
    <citation type="journal article" date="1996" name="DNA Res.">
        <title>Sequence analysis of the genome of the unicellular cyanobacterium Synechocystis sp. strain PCC6803. II. Sequence determination of the entire genome and assignment of potential protein-coding regions.</title>
        <authorList>
            <person name="Kaneko T."/>
            <person name="Sato S."/>
            <person name="Kotani H."/>
            <person name="Tanaka A."/>
            <person name="Asamizu E."/>
            <person name="Nakamura Y."/>
            <person name="Miyajima N."/>
            <person name="Hirosawa M."/>
            <person name="Sugiura M."/>
            <person name="Sasamoto S."/>
            <person name="Kimura T."/>
            <person name="Hosouchi T."/>
            <person name="Matsuno A."/>
            <person name="Muraki A."/>
            <person name="Nakazaki N."/>
            <person name="Naruo K."/>
            <person name="Okumura S."/>
            <person name="Shimpo S."/>
            <person name="Takeuchi C."/>
            <person name="Wada T."/>
            <person name="Watanabe A."/>
            <person name="Yamada M."/>
            <person name="Yasuda M."/>
            <person name="Tabata S."/>
        </authorList>
    </citation>
    <scope>NUCLEOTIDE SEQUENCE [LARGE SCALE GENOMIC DNA]</scope>
    <source>
        <strain>ATCC 27184 / PCC 6803 / Kazusa</strain>
    </source>
</reference>
<comment type="function">
    <text evidence="1">This protein binds to 23S rRNA in the presence of protein L20.</text>
</comment>
<comment type="subunit">
    <text evidence="1">Part of the 50S ribosomal subunit. Contacts protein L20.</text>
</comment>
<comment type="similarity">
    <text evidence="1">Belongs to the bacterial ribosomal protein bL21 family.</text>
</comment>
<protein>
    <recommendedName>
        <fullName evidence="1">Large ribosomal subunit protein bL21</fullName>
    </recommendedName>
    <alternativeName>
        <fullName evidence="2">50S ribosomal protein L21</fullName>
    </alternativeName>
</protein>
<gene>
    <name evidence="1" type="primary">rplU</name>
    <name evidence="1" type="synonym">rpl21</name>
    <name type="ordered locus">slr1678</name>
</gene>
<feature type="chain" id="PRO_0000181016" description="Large ribosomal subunit protein bL21">
    <location>
        <begin position="1"/>
        <end position="124"/>
    </location>
</feature>
<sequence>MSYAIIEIGGTQIRVEPGRFYEINHLDAAPEDSYVVDKVLLVKDGDNVTIGQPYVAGATVEGEILSHRRGRKVIVYKMQPKKKTRKKRGHRQELTRLLVKSISVNGTAIAEALEVDAKTPVVAG</sequence>
<proteinExistence type="inferred from homology"/>
<organism>
    <name type="scientific">Synechocystis sp. (strain ATCC 27184 / PCC 6803 / Kazusa)</name>
    <dbReference type="NCBI Taxonomy" id="1111708"/>
    <lineage>
        <taxon>Bacteria</taxon>
        <taxon>Bacillati</taxon>
        <taxon>Cyanobacteriota</taxon>
        <taxon>Cyanophyceae</taxon>
        <taxon>Synechococcales</taxon>
        <taxon>Merismopediaceae</taxon>
        <taxon>Synechocystis</taxon>
    </lineage>
</organism>
<dbReference type="EMBL" id="BA000022">
    <property type="protein sequence ID" value="BAA18360.1"/>
    <property type="molecule type" value="Genomic_DNA"/>
</dbReference>
<dbReference type="PIR" id="S75901">
    <property type="entry name" value="S75901"/>
</dbReference>
<dbReference type="SMR" id="P74266"/>
<dbReference type="FunCoup" id="P74266">
    <property type="interactions" value="373"/>
</dbReference>
<dbReference type="STRING" id="1148.gene:10499236"/>
<dbReference type="PaxDb" id="1148-1653446"/>
<dbReference type="EnsemblBacteria" id="BAA18360">
    <property type="protein sequence ID" value="BAA18360"/>
    <property type="gene ID" value="BAA18360"/>
</dbReference>
<dbReference type="KEGG" id="syn:slr1678"/>
<dbReference type="eggNOG" id="COG0261">
    <property type="taxonomic scope" value="Bacteria"/>
</dbReference>
<dbReference type="InParanoid" id="P74266"/>
<dbReference type="PhylomeDB" id="P74266"/>
<dbReference type="Proteomes" id="UP000001425">
    <property type="component" value="Chromosome"/>
</dbReference>
<dbReference type="GO" id="GO:0005737">
    <property type="term" value="C:cytoplasm"/>
    <property type="evidence" value="ECO:0007669"/>
    <property type="project" value="UniProtKB-ARBA"/>
</dbReference>
<dbReference type="GO" id="GO:1990904">
    <property type="term" value="C:ribonucleoprotein complex"/>
    <property type="evidence" value="ECO:0007669"/>
    <property type="project" value="UniProtKB-KW"/>
</dbReference>
<dbReference type="GO" id="GO:0005840">
    <property type="term" value="C:ribosome"/>
    <property type="evidence" value="ECO:0007669"/>
    <property type="project" value="UniProtKB-KW"/>
</dbReference>
<dbReference type="GO" id="GO:0019843">
    <property type="term" value="F:rRNA binding"/>
    <property type="evidence" value="ECO:0007669"/>
    <property type="project" value="UniProtKB-UniRule"/>
</dbReference>
<dbReference type="GO" id="GO:0003735">
    <property type="term" value="F:structural constituent of ribosome"/>
    <property type="evidence" value="ECO:0000318"/>
    <property type="project" value="GO_Central"/>
</dbReference>
<dbReference type="GO" id="GO:0006412">
    <property type="term" value="P:translation"/>
    <property type="evidence" value="ECO:0007669"/>
    <property type="project" value="UniProtKB-UniRule"/>
</dbReference>
<dbReference type="HAMAP" id="MF_01363">
    <property type="entry name" value="Ribosomal_bL21"/>
    <property type="match status" value="1"/>
</dbReference>
<dbReference type="InterPro" id="IPR028909">
    <property type="entry name" value="bL21-like"/>
</dbReference>
<dbReference type="InterPro" id="IPR036164">
    <property type="entry name" value="bL21-like_sf"/>
</dbReference>
<dbReference type="InterPro" id="IPR001787">
    <property type="entry name" value="Ribosomal_bL21"/>
</dbReference>
<dbReference type="InterPro" id="IPR018258">
    <property type="entry name" value="Ribosomal_bL21_CS"/>
</dbReference>
<dbReference type="NCBIfam" id="TIGR00061">
    <property type="entry name" value="L21"/>
    <property type="match status" value="1"/>
</dbReference>
<dbReference type="PANTHER" id="PTHR21349">
    <property type="entry name" value="50S RIBOSOMAL PROTEIN L21"/>
    <property type="match status" value="1"/>
</dbReference>
<dbReference type="PANTHER" id="PTHR21349:SF0">
    <property type="entry name" value="LARGE RIBOSOMAL SUBUNIT PROTEIN BL21M"/>
    <property type="match status" value="1"/>
</dbReference>
<dbReference type="Pfam" id="PF00829">
    <property type="entry name" value="Ribosomal_L21p"/>
    <property type="match status" value="1"/>
</dbReference>
<dbReference type="SUPFAM" id="SSF141091">
    <property type="entry name" value="L21p-like"/>
    <property type="match status" value="1"/>
</dbReference>
<dbReference type="PROSITE" id="PS01169">
    <property type="entry name" value="RIBOSOMAL_L21"/>
    <property type="match status" value="1"/>
</dbReference>
<name>RL21_SYNY3</name>
<keyword id="KW-1185">Reference proteome</keyword>
<keyword id="KW-0687">Ribonucleoprotein</keyword>
<keyword id="KW-0689">Ribosomal protein</keyword>
<keyword id="KW-0694">RNA-binding</keyword>
<keyword id="KW-0699">rRNA-binding</keyword>
<evidence type="ECO:0000255" key="1">
    <source>
        <dbReference type="HAMAP-Rule" id="MF_01363"/>
    </source>
</evidence>
<evidence type="ECO:0000305" key="2"/>